<proteinExistence type="evidence at protein level"/>
<reference evidence="6" key="1">
    <citation type="journal article" date="1998" name="Science">
        <title>Genome sequence of the nematode C. elegans: a platform for investigating biology.</title>
        <authorList>
            <consortium name="The C. elegans sequencing consortium"/>
        </authorList>
    </citation>
    <scope>NUCLEOTIDE SEQUENCE [LARGE SCALE GENOMIC DNA]</scope>
    <source>
        <strain evidence="6">Bristol N2</strain>
    </source>
</reference>
<reference evidence="4" key="2">
    <citation type="journal article" date="2009" name="FEBS J.">
        <title>Functional analysis of pyrimidine biosynthesis enzymes using the anticancer drug 5-fluorouracil in Caenorhabditis elegans.</title>
        <authorList>
            <person name="Kim S."/>
            <person name="Park D.H."/>
            <person name="Kim T.H."/>
            <person name="Hwang M."/>
            <person name="Shim J."/>
        </authorList>
    </citation>
    <scope>FUNCTION</scope>
    <scope>CATALYTIC ACTIVITY</scope>
    <scope>PATHWAY</scope>
    <scope>TISSUE SPECIFICITY</scope>
</reference>
<evidence type="ECO:0000250" key="1">
    <source>
        <dbReference type="UniProtKB" id="P08870"/>
    </source>
</evidence>
<evidence type="ECO:0000269" key="2">
    <source>
    </source>
</evidence>
<evidence type="ECO:0000303" key="3">
    <source>
    </source>
</evidence>
<evidence type="ECO:0000305" key="4"/>
<evidence type="ECO:0000305" key="5">
    <source>
    </source>
</evidence>
<evidence type="ECO:0000312" key="6">
    <source>
        <dbReference type="Proteomes" id="UP000001940"/>
    </source>
</evidence>
<evidence type="ECO:0000312" key="7">
    <source>
        <dbReference type="WormBase" id="R12E2.11"/>
    </source>
</evidence>
<protein>
    <recommendedName>
        <fullName evidence="3">Orotate phosphoribosyltransferase</fullName>
        <shortName evidence="3">OPRT</shortName>
        <shortName evidence="3">OPRTase</shortName>
        <ecNumber evidence="2">2.4.2.10</ecNumber>
    </recommendedName>
    <alternativeName>
        <fullName evidence="5">Uracil phosphoribosyltransferase</fullName>
        <ecNumber evidence="2">2.4.2.9</ecNumber>
    </alternativeName>
</protein>
<organism evidence="6">
    <name type="scientific">Caenorhabditis elegans</name>
    <dbReference type="NCBI Taxonomy" id="6239"/>
    <lineage>
        <taxon>Eukaryota</taxon>
        <taxon>Metazoa</taxon>
        <taxon>Ecdysozoa</taxon>
        <taxon>Nematoda</taxon>
        <taxon>Chromadorea</taxon>
        <taxon>Rhabditida</taxon>
        <taxon>Rhabditina</taxon>
        <taxon>Rhabditomorpha</taxon>
        <taxon>Rhabditoidea</taxon>
        <taxon>Rhabditidae</taxon>
        <taxon>Peloderinae</taxon>
        <taxon>Caenorhabditis</taxon>
    </lineage>
</organism>
<comment type="function">
    <text evidence="2">Phosphoribosyltransferase which catalyzes the formation of UMP from uracil in vitro and thus may be involved in UMP biosynthesis via the salvage pathway. May also participate in the first step of UMP synthesis by catalyzing the formation of orotidine 5'-phosphate, a UMP precursor, from orotate.</text>
</comment>
<comment type="catalytic activity">
    <reaction evidence="2">
        <text>orotidine 5'-phosphate + diphosphate = orotate + 5-phospho-alpha-D-ribose 1-diphosphate</text>
        <dbReference type="Rhea" id="RHEA:10380"/>
        <dbReference type="ChEBI" id="CHEBI:30839"/>
        <dbReference type="ChEBI" id="CHEBI:33019"/>
        <dbReference type="ChEBI" id="CHEBI:57538"/>
        <dbReference type="ChEBI" id="CHEBI:58017"/>
        <dbReference type="EC" id="2.4.2.10"/>
    </reaction>
</comment>
<comment type="catalytic activity">
    <reaction evidence="2">
        <text>UMP + diphosphate = 5-phospho-alpha-D-ribose 1-diphosphate + uracil</text>
        <dbReference type="Rhea" id="RHEA:13017"/>
        <dbReference type="ChEBI" id="CHEBI:17568"/>
        <dbReference type="ChEBI" id="CHEBI:33019"/>
        <dbReference type="ChEBI" id="CHEBI:57865"/>
        <dbReference type="ChEBI" id="CHEBI:58017"/>
        <dbReference type="EC" id="2.4.2.9"/>
    </reaction>
</comment>
<comment type="pathway">
    <text evidence="2">Pyrimidine metabolism; UMP biosynthesis via de novo pathway; UMP from orotate: step 1/2.</text>
</comment>
<comment type="pathway">
    <text evidence="2">Pyrimidine metabolism; UMP biosynthesis via salvage pathway; UMP from uracil: step 1/1.</text>
</comment>
<comment type="subunit">
    <text evidence="1">Homodimer.</text>
</comment>
<comment type="tissue specificity">
    <text evidence="2">Expressed in body wall muscles, spermatheca and vulva muscles.</text>
</comment>
<comment type="similarity">
    <text evidence="4">Belongs to the purine/pyrimidine phosphoribosyltransferase family. PyrE subfamily.</text>
</comment>
<sequence>MTAATATANGNHSIEDPVVMKVQAASPIQETDFFENLYQMECFRTGEFYLKSGQMTPIYIDLRRIMSSPRVLRMAAQAMCEKIVASNLKFDYVVGVPYAALPLATLVSDILNVPMLMKRKEAKAYGTKQLIEGVYQPGGTVLLVEDVVTSGESIRETAEAIRNENLLVTDAIAVLDRQQGATANLAEDNLNFLSFLTMEKILDGLITKNEMTEERKHEIIAHLAKPF</sequence>
<name>PYRE_CAEEL</name>
<accession>O61790</accession>
<dbReference type="EC" id="2.4.2.10" evidence="2"/>
<dbReference type="EC" id="2.4.2.9" evidence="2"/>
<dbReference type="EMBL" id="BX284601">
    <property type="protein sequence ID" value="CCD65178.1"/>
    <property type="molecule type" value="Genomic_DNA"/>
</dbReference>
<dbReference type="PIR" id="T33094">
    <property type="entry name" value="T33094"/>
</dbReference>
<dbReference type="RefSeq" id="NP_491317.1">
    <property type="nucleotide sequence ID" value="NM_058916.6"/>
</dbReference>
<dbReference type="SMR" id="O61790"/>
<dbReference type="FunCoup" id="O61790">
    <property type="interactions" value="32"/>
</dbReference>
<dbReference type="IntAct" id="O61790">
    <property type="interactions" value="1"/>
</dbReference>
<dbReference type="STRING" id="6239.R12E2.11.2"/>
<dbReference type="PaxDb" id="6239-R12E2.11"/>
<dbReference type="PeptideAtlas" id="O61790"/>
<dbReference type="EnsemblMetazoa" id="R12E2.11.1">
    <property type="protein sequence ID" value="R12E2.11.1"/>
    <property type="gene ID" value="WBGene00020036"/>
</dbReference>
<dbReference type="GeneID" id="172008"/>
<dbReference type="KEGG" id="cel:CELE_R12E2.11"/>
<dbReference type="UCSC" id="R12E2.11">
    <property type="organism name" value="c. elegans"/>
</dbReference>
<dbReference type="AGR" id="WB:WBGene00020036"/>
<dbReference type="CTD" id="172008"/>
<dbReference type="WormBase" id="R12E2.11">
    <property type="protein sequence ID" value="CE18143"/>
    <property type="gene ID" value="WBGene00020036"/>
</dbReference>
<dbReference type="eggNOG" id="KOG1377">
    <property type="taxonomic scope" value="Eukaryota"/>
</dbReference>
<dbReference type="HOGENOM" id="CLU_074878_2_0_1"/>
<dbReference type="InParanoid" id="O61790"/>
<dbReference type="OMA" id="ENPFTWA"/>
<dbReference type="OrthoDB" id="10263753at2759"/>
<dbReference type="PhylomeDB" id="O61790"/>
<dbReference type="UniPathway" id="UPA00070">
    <property type="reaction ID" value="UER00119"/>
</dbReference>
<dbReference type="UniPathway" id="UPA00574">
    <property type="reaction ID" value="UER00636"/>
</dbReference>
<dbReference type="PRO" id="PR:O61790"/>
<dbReference type="Proteomes" id="UP000001940">
    <property type="component" value="Chromosome I"/>
</dbReference>
<dbReference type="Bgee" id="WBGene00020036">
    <property type="expression patterns" value="Expressed in larva and 4 other cell types or tissues"/>
</dbReference>
<dbReference type="GO" id="GO:0004588">
    <property type="term" value="F:orotate phosphoribosyltransferase activity"/>
    <property type="evidence" value="ECO:0000314"/>
    <property type="project" value="WormBase"/>
</dbReference>
<dbReference type="GO" id="GO:0004590">
    <property type="term" value="F:orotidine-5'-phosphate decarboxylase activity"/>
    <property type="evidence" value="ECO:0000318"/>
    <property type="project" value="GO_Central"/>
</dbReference>
<dbReference type="GO" id="GO:0004845">
    <property type="term" value="F:uracil phosphoribosyltransferase activity"/>
    <property type="evidence" value="ECO:0007669"/>
    <property type="project" value="UniProtKB-EC"/>
</dbReference>
<dbReference type="GO" id="GO:0044205">
    <property type="term" value="P:'de novo' UMP biosynthetic process"/>
    <property type="evidence" value="ECO:0007669"/>
    <property type="project" value="UniProtKB-UniPathway"/>
</dbReference>
<dbReference type="GO" id="GO:0019856">
    <property type="term" value="P:pyrimidine nucleobase biosynthetic process"/>
    <property type="evidence" value="ECO:0000318"/>
    <property type="project" value="GO_Central"/>
</dbReference>
<dbReference type="GO" id="GO:0006222">
    <property type="term" value="P:UMP biosynthetic process"/>
    <property type="evidence" value="ECO:0000314"/>
    <property type="project" value="WormBase"/>
</dbReference>
<dbReference type="GO" id="GO:0044206">
    <property type="term" value="P:UMP salvage"/>
    <property type="evidence" value="ECO:0007669"/>
    <property type="project" value="UniProtKB-UniPathway"/>
</dbReference>
<dbReference type="CDD" id="cd06223">
    <property type="entry name" value="PRTases_typeI"/>
    <property type="match status" value="1"/>
</dbReference>
<dbReference type="FunFam" id="3.40.50.2020:FF:000091">
    <property type="entry name" value="Orotate phosphoribosyltransferase"/>
    <property type="match status" value="1"/>
</dbReference>
<dbReference type="Gene3D" id="3.40.50.2020">
    <property type="match status" value="1"/>
</dbReference>
<dbReference type="HAMAP" id="MF_01208">
    <property type="entry name" value="PyrE"/>
    <property type="match status" value="1"/>
</dbReference>
<dbReference type="InterPro" id="IPR023031">
    <property type="entry name" value="OPRT"/>
</dbReference>
<dbReference type="InterPro" id="IPR004467">
    <property type="entry name" value="Or_phspho_trans_dom"/>
</dbReference>
<dbReference type="InterPro" id="IPR000836">
    <property type="entry name" value="PRibTrfase_dom"/>
</dbReference>
<dbReference type="InterPro" id="IPR029057">
    <property type="entry name" value="PRTase-like"/>
</dbReference>
<dbReference type="NCBIfam" id="TIGR00336">
    <property type="entry name" value="pyrE"/>
    <property type="match status" value="1"/>
</dbReference>
<dbReference type="PANTHER" id="PTHR19278">
    <property type="entry name" value="OROTATE PHOSPHORIBOSYLTRANSFERASE"/>
    <property type="match status" value="1"/>
</dbReference>
<dbReference type="PANTHER" id="PTHR19278:SF33">
    <property type="entry name" value="OROTATE PHOSPHORIBOSYLTRANSFERASE"/>
    <property type="match status" value="1"/>
</dbReference>
<dbReference type="Pfam" id="PF00156">
    <property type="entry name" value="Pribosyltran"/>
    <property type="match status" value="1"/>
</dbReference>
<dbReference type="SUPFAM" id="SSF53271">
    <property type="entry name" value="PRTase-like"/>
    <property type="match status" value="1"/>
</dbReference>
<dbReference type="PROSITE" id="PS00103">
    <property type="entry name" value="PUR_PYR_PR_TRANSFER"/>
    <property type="match status" value="1"/>
</dbReference>
<feature type="chain" id="PRO_0000439230" description="Orotate phosphoribosyltransferase" evidence="4">
    <location>
        <begin position="1"/>
        <end position="227"/>
    </location>
</feature>
<feature type="binding site" description="in other chain" evidence="1">
    <location>
        <position position="51"/>
    </location>
    <ligand>
        <name>5-phospho-alpha-D-ribose 1-diphosphate</name>
        <dbReference type="ChEBI" id="CHEBI:58017"/>
        <note>ligand shared between dimeric partners</note>
    </ligand>
</feature>
<feature type="binding site" evidence="1">
    <location>
        <position position="119"/>
    </location>
    <ligand>
        <name>5-phospho-alpha-D-ribose 1-diphosphate</name>
        <dbReference type="ChEBI" id="CHEBI:58017"/>
        <note>ligand shared between dimeric partners</note>
    </ligand>
</feature>
<feature type="binding site" description="in other chain" evidence="1">
    <location>
        <position position="120"/>
    </location>
    <ligand>
        <name>5-phospho-alpha-D-ribose 1-diphosphate</name>
        <dbReference type="ChEBI" id="CHEBI:58017"/>
        <note>ligand shared between dimeric partners</note>
    </ligand>
</feature>
<feature type="binding site" evidence="1">
    <location>
        <position position="123"/>
    </location>
    <ligand>
        <name>5-phospho-alpha-D-ribose 1-diphosphate</name>
        <dbReference type="ChEBI" id="CHEBI:58017"/>
        <note>ligand shared between dimeric partners</note>
    </ligand>
</feature>
<feature type="binding site" evidence="1">
    <location>
        <position position="149"/>
    </location>
    <ligand>
        <name>orotate</name>
        <dbReference type="ChEBI" id="CHEBI:30839"/>
    </ligand>
</feature>
<feature type="binding site" evidence="1">
    <location>
        <position position="177"/>
    </location>
    <ligand>
        <name>orotate</name>
        <dbReference type="ChEBI" id="CHEBI:30839"/>
    </ligand>
</feature>
<gene>
    <name evidence="7" type="ORF">R12E2.11</name>
</gene>
<keyword id="KW-0328">Glycosyltransferase</keyword>
<keyword id="KW-0665">Pyrimidine biosynthesis</keyword>
<keyword id="KW-1185">Reference proteome</keyword>
<keyword id="KW-0808">Transferase</keyword>